<accession>Q08773</accession>
<accession>D6W303</accession>
<comment type="function">
    <text evidence="5 6 7 8 9 10 13">Catalytic component of the ISW2 complex, which acts in remodeling the chromatin by catalyzing an ATP-dependent alteration in the structure of nucleosomal DNA. The ISW2 complex is involved in coordinating transcriptional repression and in inheritance of telomeric silencing. It is involved in repression of MAT a-specific genes, INO1, and early meiotic genes during mitotic growth dependent upon transcription factor UME6 and in a parallel pathway to the RPD3-SIN3 histone deacetylase complex.</text>
</comment>
<comment type="subunit">
    <text evidence="5 13 14">Component of the ISW2 complex, which at least consists of ISW2, ITC1, DLS1 and DPB4. May form a stable subcomplex with ITC1.</text>
</comment>
<comment type="interaction">
    <interactant intactId="EBI-31118">
        <id>Q08773</id>
    </interactant>
    <interactant intactId="EBI-23967">
        <id>P53125</id>
        <label>ITC1</label>
    </interactant>
    <organismsDiffer>false</organismsDiffer>
    <experiments>3</experiments>
</comment>
<comment type="subcellular location">
    <subcellularLocation>
        <location evidence="3 11">Nucleus</location>
    </subcellularLocation>
</comment>
<comment type="miscellaneous">
    <text evidence="12">Present with 1520 molecules/cell in log phase SD medium.</text>
</comment>
<comment type="similarity">
    <text evidence="15">Belongs to the SNF2/RAD54 helicase family. ISWI subfamily.</text>
</comment>
<gene>
    <name type="primary">ISW2</name>
    <name type="ordered locus">YOR304W</name>
</gene>
<sequence length="1120" mass="130327">MTTQQEEQRSDTKNSKSESPSEVLVDTLDSKSNGSSDDDNIGQSEELSDKEIYTVEDRPPEYWAQRKKKFVLDVDPKYAKQKDKSDTYKRFKYLLGVTDLFRHFIGIKAKHDKNIQKLLKQLDSDANKLSKSHSTVSSSSRHHRKTEKEEDAELMADEEEEIVDTYQEDIFVSESPSFVKSGKLRDYQVQGLNWLISLHENKLSGILADEMGLGKTLQTISFLGYLRYVKQIEGPFLIIVPKSTLDNWRREFLKWTPNVNVLVLHGDKDTRADIVRNIILEARFDVLITSYEMVIREKNALKRLAWQYIVIDEAHRIKNEQSALSQIIRLFYSKNRLLITGTPLQNNLHELWALLNFLLPDIFGDSELFDEWFEQNNSEQDQEIVIQQLHSVLNPFLLRRVKADVEKSLLPKIETNVYVGMTDMQIQWYKSLLEKDIDAVNGAVGKREGKTRLLNIVMQLRKCCNHPYLFEGAEPGPPYTTDEHLIFNSGKMIILDKLLKRLKEKGSRVLIFSQMSRLLDILEDYCYFRDFEYCRIDGSTSHEERIEAIDEYNKPNSEKFVFLLTTRAGGLGINLVTADTVILFDSDWNPQADLQAMDRAHRIGQKKQVHVYRFVTENAIEEKVIERAAQKLRLDQLVIQQGTGKKTASLGNSKDDLLDMIQFGAKNMFEKKASKVTVDADIDDILKKGEQKTQELNAKYQSLGLDDLQKFNGIENQSAYEWNGKSFQKKSNDKVVEWINPSRRERRREQTTYSVDDYYKEIIGGGSKSASKQTPQPKAPRAPKVIHGQDFQFFPKELDALQEKEQLYFKKKVNYKVTSYDITGDIRNEGSDAEEEEGEYKNAANTEGHKGHEELKRRIEEEQEKINSAPDFTQEDELRKQELISKAFTNWNKRDFMAFINACAKYGRDDMENIKKSIDSKTPEEVEVYAKIFWERLKEINGWEKYLHNVELGEKKNEKLKFQETLLRQKIEQCKHPLHELIIQYPPNNARRTYNTLEDKFLLLAVNKYGLRADKLYEKLKQEIMMSDLFTFDWFIKTRTVHELSKRVHTLLTLIVREYEQPDANKKKRSRTSATREDTPLSQNESTRASTVPNLPTTMVTNQKDTNDHVDKRTKIDQEA</sequence>
<protein>
    <recommendedName>
        <fullName>ISWI chromatin-remodeling complex ATPase ISW2</fullName>
        <ecNumber>3.6.4.-</ecNumber>
    </recommendedName>
    <alternativeName>
        <fullName>Imitation switch protein 2</fullName>
    </alternativeName>
</protein>
<evidence type="ECO:0000255" key="1">
    <source>
        <dbReference type="PROSITE-ProRule" id="PRU00541"/>
    </source>
</evidence>
<evidence type="ECO:0000255" key="2">
    <source>
        <dbReference type="PROSITE-ProRule" id="PRU00542"/>
    </source>
</evidence>
<evidence type="ECO:0000255" key="3">
    <source>
        <dbReference type="PROSITE-ProRule" id="PRU00624"/>
    </source>
</evidence>
<evidence type="ECO:0000256" key="4">
    <source>
        <dbReference type="SAM" id="MobiDB-lite"/>
    </source>
</evidence>
<evidence type="ECO:0000269" key="5">
    <source>
    </source>
</evidence>
<evidence type="ECO:0000269" key="6">
    <source>
    </source>
</evidence>
<evidence type="ECO:0000269" key="7">
    <source>
    </source>
</evidence>
<evidence type="ECO:0000269" key="8">
    <source>
    </source>
</evidence>
<evidence type="ECO:0000269" key="9">
    <source>
    </source>
</evidence>
<evidence type="ECO:0000269" key="10">
    <source>
    </source>
</evidence>
<evidence type="ECO:0000269" key="11">
    <source>
    </source>
</evidence>
<evidence type="ECO:0000269" key="12">
    <source>
    </source>
</evidence>
<evidence type="ECO:0000269" key="13">
    <source>
    </source>
</evidence>
<evidence type="ECO:0000269" key="14">
    <source>
    </source>
</evidence>
<evidence type="ECO:0000305" key="15"/>
<evidence type="ECO:0007744" key="16">
    <source>
    </source>
</evidence>
<evidence type="ECO:0007744" key="17">
    <source>
    </source>
</evidence>
<evidence type="ECO:0007744" key="18">
    <source>
    </source>
</evidence>
<feature type="chain" id="PRO_0000240453" description="ISWI chromatin-remodeling complex ATPase ISW2">
    <location>
        <begin position="1"/>
        <end position="1120"/>
    </location>
</feature>
<feature type="domain" description="Helicase ATP-binding" evidence="1">
    <location>
        <begin position="196"/>
        <end position="361"/>
    </location>
</feature>
<feature type="domain" description="Helicase C-terminal" evidence="2">
    <location>
        <begin position="494"/>
        <end position="645"/>
    </location>
</feature>
<feature type="domain" description="SANT" evidence="3">
    <location>
        <begin position="886"/>
        <end position="938"/>
    </location>
</feature>
<feature type="region of interest" description="Disordered" evidence="4">
    <location>
        <begin position="1"/>
        <end position="58"/>
    </location>
</feature>
<feature type="region of interest" description="Disordered" evidence="4">
    <location>
        <begin position="129"/>
        <end position="153"/>
    </location>
</feature>
<feature type="region of interest" description="Disordered" evidence="4">
    <location>
        <begin position="764"/>
        <end position="783"/>
    </location>
</feature>
<feature type="region of interest" description="Disordered" evidence="4">
    <location>
        <begin position="828"/>
        <end position="853"/>
    </location>
</feature>
<feature type="region of interest" description="Disordered" evidence="4">
    <location>
        <begin position="1062"/>
        <end position="1120"/>
    </location>
</feature>
<feature type="short sequence motif" description="DEAH box">
    <location>
        <begin position="312"/>
        <end position="315"/>
    </location>
</feature>
<feature type="compositionally biased region" description="Basic and acidic residues" evidence="4">
    <location>
        <begin position="1"/>
        <end position="16"/>
    </location>
</feature>
<feature type="compositionally biased region" description="Basic and acidic residues" evidence="4">
    <location>
        <begin position="47"/>
        <end position="58"/>
    </location>
</feature>
<feature type="compositionally biased region" description="Polar residues" evidence="4">
    <location>
        <begin position="1080"/>
        <end position="1104"/>
    </location>
</feature>
<feature type="compositionally biased region" description="Basic and acidic residues" evidence="4">
    <location>
        <begin position="1105"/>
        <end position="1120"/>
    </location>
</feature>
<feature type="binding site" evidence="1">
    <location>
        <begin position="209"/>
        <end position="216"/>
    </location>
    <ligand>
        <name>ATP</name>
        <dbReference type="ChEBI" id="CHEBI:30616"/>
    </ligand>
</feature>
<feature type="modified residue" description="Phosphoserine" evidence="18">
    <location>
        <position position="17"/>
    </location>
</feature>
<feature type="modified residue" description="Phosphoserine" evidence="18">
    <location>
        <position position="19"/>
    </location>
</feature>
<feature type="modified residue" description="Phosphoserine" evidence="16 17 18">
    <location>
        <position position="831"/>
    </location>
</feature>
<feature type="modified residue" description="Phosphothreonine" evidence="17 18">
    <location>
        <position position="1079"/>
    </location>
</feature>
<feature type="modified residue" description="Phosphoserine" evidence="17 18">
    <location>
        <position position="1082"/>
    </location>
</feature>
<feature type="mutagenesis site" description="Abolishes ATPase activity." evidence="5">
    <original>K</original>
    <variation>A</variation>
    <location>
        <position position="215"/>
    </location>
</feature>
<organism>
    <name type="scientific">Saccharomyces cerevisiae (strain ATCC 204508 / S288c)</name>
    <name type="common">Baker's yeast</name>
    <dbReference type="NCBI Taxonomy" id="559292"/>
    <lineage>
        <taxon>Eukaryota</taxon>
        <taxon>Fungi</taxon>
        <taxon>Dikarya</taxon>
        <taxon>Ascomycota</taxon>
        <taxon>Saccharomycotina</taxon>
        <taxon>Saccharomycetes</taxon>
        <taxon>Saccharomycetales</taxon>
        <taxon>Saccharomycetaceae</taxon>
        <taxon>Saccharomyces</taxon>
    </lineage>
</organism>
<name>ISW2_YEAST</name>
<dbReference type="EC" id="3.6.4.-"/>
<dbReference type="EMBL" id="Z75212">
    <property type="protein sequence ID" value="CAA99622.1"/>
    <property type="molecule type" value="Genomic_DNA"/>
</dbReference>
<dbReference type="EMBL" id="BK006948">
    <property type="protein sequence ID" value="DAA11069.1"/>
    <property type="molecule type" value="Genomic_DNA"/>
</dbReference>
<dbReference type="PIR" id="S67208">
    <property type="entry name" value="S67208"/>
</dbReference>
<dbReference type="RefSeq" id="NP_014948.1">
    <property type="nucleotide sequence ID" value="NM_001183724.1"/>
</dbReference>
<dbReference type="SMR" id="Q08773"/>
<dbReference type="BioGRID" id="34692">
    <property type="interactions" value="358"/>
</dbReference>
<dbReference type="ComplexPortal" id="CPX-728">
    <property type="entry name" value="ISW2 chromatin remodeling complex"/>
</dbReference>
<dbReference type="ComplexPortal" id="CPX-734">
    <property type="entry name" value="ISW2 chromatin remodeling complex variant 2"/>
</dbReference>
<dbReference type="DIP" id="DIP-6603N"/>
<dbReference type="FunCoup" id="Q08773">
    <property type="interactions" value="1460"/>
</dbReference>
<dbReference type="IntAct" id="Q08773">
    <property type="interactions" value="45"/>
</dbReference>
<dbReference type="MINT" id="Q08773"/>
<dbReference type="STRING" id="4932.YOR304W"/>
<dbReference type="iPTMnet" id="Q08773"/>
<dbReference type="PaxDb" id="4932-YOR304W"/>
<dbReference type="PeptideAtlas" id="Q08773"/>
<dbReference type="EnsemblFungi" id="YOR304W_mRNA">
    <property type="protein sequence ID" value="YOR304W"/>
    <property type="gene ID" value="YOR304W"/>
</dbReference>
<dbReference type="GeneID" id="854480"/>
<dbReference type="KEGG" id="sce:YOR304W"/>
<dbReference type="AGR" id="SGD:S000005831"/>
<dbReference type="SGD" id="S000005831">
    <property type="gene designation" value="ISW2"/>
</dbReference>
<dbReference type="VEuPathDB" id="FungiDB:YOR304W"/>
<dbReference type="eggNOG" id="KOG0385">
    <property type="taxonomic scope" value="Eukaryota"/>
</dbReference>
<dbReference type="GeneTree" id="ENSGT00940000176603"/>
<dbReference type="HOGENOM" id="CLU_000315_0_0_1"/>
<dbReference type="InParanoid" id="Q08773"/>
<dbReference type="OMA" id="VHDYQFF"/>
<dbReference type="OrthoDB" id="5857104at2759"/>
<dbReference type="BioCyc" id="YEAST:G3O-33788-MONOMER"/>
<dbReference type="BioGRID-ORCS" id="854480">
    <property type="hits" value="0 hits in 10 CRISPR screens"/>
</dbReference>
<dbReference type="PRO" id="PR:Q08773"/>
<dbReference type="Proteomes" id="UP000002311">
    <property type="component" value="Chromosome XV"/>
</dbReference>
<dbReference type="RNAct" id="Q08773">
    <property type="molecule type" value="protein"/>
</dbReference>
<dbReference type="GO" id="GO:0008623">
    <property type="term" value="C:CHRAC"/>
    <property type="evidence" value="ECO:0000314"/>
    <property type="project" value="SGD"/>
</dbReference>
<dbReference type="GO" id="GO:0000785">
    <property type="term" value="C:chromatin"/>
    <property type="evidence" value="ECO:0000318"/>
    <property type="project" value="GO_Central"/>
</dbReference>
<dbReference type="GO" id="GO:0000781">
    <property type="term" value="C:chromosome, telomeric region"/>
    <property type="evidence" value="ECO:0007669"/>
    <property type="project" value="GOC"/>
</dbReference>
<dbReference type="GO" id="GO:0005880">
    <property type="term" value="C:nuclear microtubule"/>
    <property type="evidence" value="ECO:0000314"/>
    <property type="project" value="SGD"/>
</dbReference>
<dbReference type="GO" id="GO:0005634">
    <property type="term" value="C:nucleus"/>
    <property type="evidence" value="ECO:0007005"/>
    <property type="project" value="SGD"/>
</dbReference>
<dbReference type="GO" id="GO:0005524">
    <property type="term" value="F:ATP binding"/>
    <property type="evidence" value="ECO:0007669"/>
    <property type="project" value="UniProtKB-KW"/>
</dbReference>
<dbReference type="GO" id="GO:0019237">
    <property type="term" value="F:centromeric DNA binding"/>
    <property type="evidence" value="ECO:0000314"/>
    <property type="project" value="SGD"/>
</dbReference>
<dbReference type="GO" id="GO:0003682">
    <property type="term" value="F:chromatin binding"/>
    <property type="evidence" value="ECO:0000314"/>
    <property type="project" value="SGD"/>
</dbReference>
<dbReference type="GO" id="GO:0003677">
    <property type="term" value="F:DNA binding"/>
    <property type="evidence" value="ECO:0000318"/>
    <property type="project" value="GO_Central"/>
</dbReference>
<dbReference type="GO" id="GO:0015616">
    <property type="term" value="F:DNA translocase activity"/>
    <property type="evidence" value="ECO:0000314"/>
    <property type="project" value="SGD"/>
</dbReference>
<dbReference type="GO" id="GO:0004386">
    <property type="term" value="F:helicase activity"/>
    <property type="evidence" value="ECO:0007669"/>
    <property type="project" value="UniProtKB-KW"/>
</dbReference>
<dbReference type="GO" id="GO:0016787">
    <property type="term" value="F:hydrolase activity"/>
    <property type="evidence" value="ECO:0007669"/>
    <property type="project" value="UniProtKB-KW"/>
</dbReference>
<dbReference type="GO" id="GO:0140750">
    <property type="term" value="F:nucleosome array spacer activity"/>
    <property type="evidence" value="ECO:0000318"/>
    <property type="project" value="GO_Central"/>
</dbReference>
<dbReference type="GO" id="GO:0031491">
    <property type="term" value="F:nucleosome binding"/>
    <property type="evidence" value="ECO:0007669"/>
    <property type="project" value="InterPro"/>
</dbReference>
<dbReference type="GO" id="GO:0003697">
    <property type="term" value="F:single-stranded DNA binding"/>
    <property type="evidence" value="ECO:0000314"/>
    <property type="project" value="SGD"/>
</dbReference>
<dbReference type="GO" id="GO:0071444">
    <property type="term" value="P:cellular response to pheromone"/>
    <property type="evidence" value="ECO:0000315"/>
    <property type="project" value="SGD"/>
</dbReference>
<dbReference type="GO" id="GO:0006338">
    <property type="term" value="P:chromatin remodeling"/>
    <property type="evidence" value="ECO:0000314"/>
    <property type="project" value="SGD"/>
</dbReference>
<dbReference type="GO" id="GO:0060195">
    <property type="term" value="P:negative regulation of antisense RNA transcription"/>
    <property type="evidence" value="ECO:0000316"/>
    <property type="project" value="SGD"/>
</dbReference>
<dbReference type="GO" id="GO:0000122">
    <property type="term" value="P:negative regulation of transcription by RNA polymerase II"/>
    <property type="evidence" value="ECO:0000315"/>
    <property type="project" value="SGD"/>
</dbReference>
<dbReference type="GO" id="GO:0045944">
    <property type="term" value="P:positive regulation of transcription by RNA polymerase II"/>
    <property type="evidence" value="ECO:0000318"/>
    <property type="project" value="GO_Central"/>
</dbReference>
<dbReference type="GO" id="GO:0000183">
    <property type="term" value="P:rDNA heterochromatin formation"/>
    <property type="evidence" value="ECO:0000315"/>
    <property type="project" value="SGD"/>
</dbReference>
<dbReference type="GO" id="GO:0006355">
    <property type="term" value="P:regulation of DNA-templated transcription"/>
    <property type="evidence" value="ECO:0000303"/>
    <property type="project" value="ComplexPortal"/>
</dbReference>
<dbReference type="GO" id="GO:0031509">
    <property type="term" value="P:subtelomeric heterochromatin formation"/>
    <property type="evidence" value="ECO:0000315"/>
    <property type="project" value="SGD"/>
</dbReference>
<dbReference type="GO" id="GO:0006369">
    <property type="term" value="P:termination of RNA polymerase II transcription"/>
    <property type="evidence" value="ECO:0000316"/>
    <property type="project" value="SGD"/>
</dbReference>
<dbReference type="CDD" id="cd17997">
    <property type="entry name" value="DEXHc_SMARCA1_SMARCA5"/>
    <property type="match status" value="1"/>
</dbReference>
<dbReference type="CDD" id="cd00167">
    <property type="entry name" value="SANT"/>
    <property type="match status" value="1"/>
</dbReference>
<dbReference type="CDD" id="cd18793">
    <property type="entry name" value="SF2_C_SNF"/>
    <property type="match status" value="1"/>
</dbReference>
<dbReference type="FunFam" id="3.40.50.10810:FF:000036">
    <property type="entry name" value="Chromatin remodelling complex ATPase chain"/>
    <property type="match status" value="1"/>
</dbReference>
<dbReference type="FunFam" id="3.40.50.300:FF:000082">
    <property type="entry name" value="ISWI chromatin remodeling complex ATPase ISW1"/>
    <property type="match status" value="1"/>
</dbReference>
<dbReference type="FunFam" id="1.10.10.60:FF:000022">
    <property type="entry name" value="ISWI chromatin-remodeling complex ATPase CHR11 isoform A"/>
    <property type="match status" value="1"/>
</dbReference>
<dbReference type="FunFam" id="1.10.10.60:FF:000447">
    <property type="entry name" value="ISWI chromatin-remodeling complex ATPase ISW2"/>
    <property type="match status" value="1"/>
</dbReference>
<dbReference type="FunFam" id="1.10.1040.30:FF:000004">
    <property type="entry name" value="ISWI chromatin-remodeling complex ATPase ISW2"/>
    <property type="match status" value="1"/>
</dbReference>
<dbReference type="Gene3D" id="1.10.10.60">
    <property type="entry name" value="Homeodomain-like"/>
    <property type="match status" value="2"/>
</dbReference>
<dbReference type="Gene3D" id="1.10.1040.30">
    <property type="entry name" value="ISWI, HAND domain"/>
    <property type="match status" value="1"/>
</dbReference>
<dbReference type="Gene3D" id="3.40.50.300">
    <property type="entry name" value="P-loop containing nucleotide triphosphate hydrolases"/>
    <property type="match status" value="1"/>
</dbReference>
<dbReference type="Gene3D" id="3.40.50.10810">
    <property type="entry name" value="Tandem AAA-ATPase domain"/>
    <property type="match status" value="1"/>
</dbReference>
<dbReference type="InterPro" id="IPR014001">
    <property type="entry name" value="Helicase_ATP-bd"/>
</dbReference>
<dbReference type="InterPro" id="IPR001650">
    <property type="entry name" value="Helicase_C-like"/>
</dbReference>
<dbReference type="InterPro" id="IPR009057">
    <property type="entry name" value="Homeodomain-like_sf"/>
</dbReference>
<dbReference type="InterPro" id="IPR044754">
    <property type="entry name" value="Isw1/2_DEXHc"/>
</dbReference>
<dbReference type="InterPro" id="IPR015194">
    <property type="entry name" value="ISWI_HAND-dom"/>
</dbReference>
<dbReference type="InterPro" id="IPR036306">
    <property type="entry name" value="ISWI_HAND-dom_sf"/>
</dbReference>
<dbReference type="InterPro" id="IPR027417">
    <property type="entry name" value="P-loop_NTPase"/>
</dbReference>
<dbReference type="InterPro" id="IPR001005">
    <property type="entry name" value="SANT/Myb"/>
</dbReference>
<dbReference type="InterPro" id="IPR017884">
    <property type="entry name" value="SANT_dom"/>
</dbReference>
<dbReference type="InterPro" id="IPR015195">
    <property type="entry name" value="SLIDE"/>
</dbReference>
<dbReference type="InterPro" id="IPR038718">
    <property type="entry name" value="SNF2-like_sf"/>
</dbReference>
<dbReference type="InterPro" id="IPR049730">
    <property type="entry name" value="SNF2/RAD54-like_C"/>
</dbReference>
<dbReference type="InterPro" id="IPR000330">
    <property type="entry name" value="SNF2_N"/>
</dbReference>
<dbReference type="PANTHER" id="PTHR45623">
    <property type="entry name" value="CHROMODOMAIN-HELICASE-DNA-BINDING PROTEIN 3-RELATED-RELATED"/>
    <property type="match status" value="1"/>
</dbReference>
<dbReference type="PANTHER" id="PTHR45623:SF49">
    <property type="entry name" value="SWI_SNF-RELATED MATRIX-ASSOCIATED ACTIN-DEPENDENT REGULATOR OF CHROMATIN SUBFAMILY A MEMBER 5"/>
    <property type="match status" value="1"/>
</dbReference>
<dbReference type="Pfam" id="PF09110">
    <property type="entry name" value="HAND"/>
    <property type="match status" value="1"/>
</dbReference>
<dbReference type="Pfam" id="PF00271">
    <property type="entry name" value="Helicase_C"/>
    <property type="match status" value="1"/>
</dbReference>
<dbReference type="Pfam" id="PF09111">
    <property type="entry name" value="SLIDE"/>
    <property type="match status" value="1"/>
</dbReference>
<dbReference type="Pfam" id="PF00176">
    <property type="entry name" value="SNF2-rel_dom"/>
    <property type="match status" value="1"/>
</dbReference>
<dbReference type="SMART" id="SM00487">
    <property type="entry name" value="DEXDc"/>
    <property type="match status" value="1"/>
</dbReference>
<dbReference type="SMART" id="SM00490">
    <property type="entry name" value="HELICc"/>
    <property type="match status" value="1"/>
</dbReference>
<dbReference type="SMART" id="SM00717">
    <property type="entry name" value="SANT"/>
    <property type="match status" value="2"/>
</dbReference>
<dbReference type="SUPFAM" id="SSF101224">
    <property type="entry name" value="HAND domain of the nucleosome remodeling ATPase ISWI"/>
    <property type="match status" value="1"/>
</dbReference>
<dbReference type="SUPFAM" id="SSF46689">
    <property type="entry name" value="Homeodomain-like"/>
    <property type="match status" value="2"/>
</dbReference>
<dbReference type="SUPFAM" id="SSF52540">
    <property type="entry name" value="P-loop containing nucleoside triphosphate hydrolases"/>
    <property type="match status" value="2"/>
</dbReference>
<dbReference type="PROSITE" id="PS51192">
    <property type="entry name" value="HELICASE_ATP_BIND_1"/>
    <property type="match status" value="1"/>
</dbReference>
<dbReference type="PROSITE" id="PS51194">
    <property type="entry name" value="HELICASE_CTER"/>
    <property type="match status" value="1"/>
</dbReference>
<dbReference type="PROSITE" id="PS51293">
    <property type="entry name" value="SANT"/>
    <property type="match status" value="1"/>
</dbReference>
<keyword id="KW-0067">ATP-binding</keyword>
<keyword id="KW-0156">Chromatin regulator</keyword>
<keyword id="KW-0238">DNA-binding</keyword>
<keyword id="KW-0347">Helicase</keyword>
<keyword id="KW-0378">Hydrolase</keyword>
<keyword id="KW-0547">Nucleotide-binding</keyword>
<keyword id="KW-0539">Nucleus</keyword>
<keyword id="KW-0597">Phosphoprotein</keyword>
<keyword id="KW-1185">Reference proteome</keyword>
<keyword id="KW-0678">Repressor</keyword>
<keyword id="KW-0804">Transcription</keyword>
<keyword id="KW-0805">Transcription regulation</keyword>
<reference key="1">
    <citation type="journal article" date="1997" name="Nature">
        <title>The nucleotide sequence of Saccharomyces cerevisiae chromosome XV.</title>
        <authorList>
            <person name="Dujon B."/>
            <person name="Albermann K."/>
            <person name="Aldea M."/>
            <person name="Alexandraki D."/>
            <person name="Ansorge W."/>
            <person name="Arino J."/>
            <person name="Benes V."/>
            <person name="Bohn C."/>
            <person name="Bolotin-Fukuhara M."/>
            <person name="Bordonne R."/>
            <person name="Boyer J."/>
            <person name="Camasses A."/>
            <person name="Casamayor A."/>
            <person name="Casas C."/>
            <person name="Cheret G."/>
            <person name="Cziepluch C."/>
            <person name="Daignan-Fornier B."/>
            <person name="Dang V.-D."/>
            <person name="de Haan M."/>
            <person name="Delius H."/>
            <person name="Durand P."/>
            <person name="Fairhead C."/>
            <person name="Feldmann H."/>
            <person name="Gaillon L."/>
            <person name="Galisson F."/>
            <person name="Gamo F.-J."/>
            <person name="Gancedo C."/>
            <person name="Goffeau A."/>
            <person name="Goulding S.E."/>
            <person name="Grivell L.A."/>
            <person name="Habbig B."/>
            <person name="Hand N.J."/>
            <person name="Hani J."/>
            <person name="Hattenhorst U."/>
            <person name="Hebling U."/>
            <person name="Hernando Y."/>
            <person name="Herrero E."/>
            <person name="Heumann K."/>
            <person name="Hiesel R."/>
            <person name="Hilger F."/>
            <person name="Hofmann B."/>
            <person name="Hollenberg C.P."/>
            <person name="Hughes B."/>
            <person name="Jauniaux J.-C."/>
            <person name="Kalogeropoulos A."/>
            <person name="Katsoulou C."/>
            <person name="Kordes E."/>
            <person name="Lafuente M.J."/>
            <person name="Landt O."/>
            <person name="Louis E.J."/>
            <person name="Maarse A.C."/>
            <person name="Madania A."/>
            <person name="Mannhaupt G."/>
            <person name="Marck C."/>
            <person name="Martin R.P."/>
            <person name="Mewes H.-W."/>
            <person name="Michaux G."/>
            <person name="Paces V."/>
            <person name="Parle-McDermott A.G."/>
            <person name="Pearson B.M."/>
            <person name="Perrin A."/>
            <person name="Pettersson B."/>
            <person name="Poch O."/>
            <person name="Pohl T.M."/>
            <person name="Poirey R."/>
            <person name="Portetelle D."/>
            <person name="Pujol A."/>
            <person name="Purnelle B."/>
            <person name="Ramezani Rad M."/>
            <person name="Rechmann S."/>
            <person name="Schwager C."/>
            <person name="Schweizer M."/>
            <person name="Sor F."/>
            <person name="Sterky F."/>
            <person name="Tarassov I.A."/>
            <person name="Teodoru C."/>
            <person name="Tettelin H."/>
            <person name="Thierry A."/>
            <person name="Tobiasch E."/>
            <person name="Tzermia M."/>
            <person name="Uhlen M."/>
            <person name="Unseld M."/>
            <person name="Valens M."/>
            <person name="Vandenbol M."/>
            <person name="Vetter I."/>
            <person name="Vlcek C."/>
            <person name="Voet M."/>
            <person name="Volckaert G."/>
            <person name="Voss H."/>
            <person name="Wambutt R."/>
            <person name="Wedler H."/>
            <person name="Wiemann S."/>
            <person name="Winsor B."/>
            <person name="Wolfe K.H."/>
            <person name="Zollner A."/>
            <person name="Zumstein E."/>
            <person name="Kleine K."/>
        </authorList>
    </citation>
    <scope>NUCLEOTIDE SEQUENCE [LARGE SCALE GENOMIC DNA]</scope>
    <source>
        <strain>ATCC 204508 / S288c</strain>
    </source>
</reference>
<reference key="2">
    <citation type="journal article" date="2014" name="G3 (Bethesda)">
        <title>The reference genome sequence of Saccharomyces cerevisiae: Then and now.</title>
        <authorList>
            <person name="Engel S.R."/>
            <person name="Dietrich F.S."/>
            <person name="Fisk D.G."/>
            <person name="Binkley G."/>
            <person name="Balakrishnan R."/>
            <person name="Costanzo M.C."/>
            <person name="Dwight S.S."/>
            <person name="Hitz B.C."/>
            <person name="Karra K."/>
            <person name="Nash R.S."/>
            <person name="Weng S."/>
            <person name="Wong E.D."/>
            <person name="Lloyd P."/>
            <person name="Skrzypek M.S."/>
            <person name="Miyasato S.R."/>
            <person name="Simison M."/>
            <person name="Cherry J.M."/>
        </authorList>
    </citation>
    <scope>GENOME REANNOTATION</scope>
    <source>
        <strain>ATCC 204508 / S288c</strain>
    </source>
</reference>
<reference key="3">
    <citation type="journal article" date="1999" name="Genes Dev.">
        <title>Characterization of the imitation switch subfamily of ATP-dependent chromatin-remodeling factors in Saccharomyces cerevisiae.</title>
        <authorList>
            <person name="Tsukiyama T."/>
            <person name="Palmer J."/>
            <person name="Landel C.C."/>
            <person name="Shiloach J."/>
            <person name="Wu C."/>
        </authorList>
    </citation>
    <scope>IDENTIFICATION IN THE ISW2 COMPLEX</scope>
    <scope>FUNCTION</scope>
    <scope>MUTAGENESIS OF LYS-215</scope>
</reference>
<reference key="4">
    <citation type="journal article" date="2000" name="Cell">
        <title>The Isw2 chromatin remodeling complex represses early meiotic genes upon recruitment by Ume6p.</title>
        <authorList>
            <person name="Goldmark J.P."/>
            <person name="Fazzio T.G."/>
            <person name="Estep P.W."/>
            <person name="Church G.M."/>
            <person name="Tsukiyama T."/>
        </authorList>
    </citation>
    <scope>FUNCTION OF THE ISW2 COMPLEX</scope>
</reference>
<reference key="5">
    <citation type="journal article" date="2001" name="Genes Dev.">
        <title>In vivo chromatin remodeling by yeast ISWI homologs Isw1p and Isw2p.</title>
        <authorList>
            <person name="Kent N.A."/>
            <person name="Karabetsou N."/>
            <person name="Politis P.K."/>
            <person name="Mellor J."/>
        </authorList>
    </citation>
    <scope>FUNCTION</scope>
</reference>
<reference key="6">
    <citation type="journal article" date="2001" name="J. Bacteriol.">
        <title>The Saccharomyces cerevisiae Isw2p-Itc1p complex represses INO1 expression and maintains cell morphology.</title>
        <authorList>
            <person name="Sugiyama M."/>
            <person name="Nikawa J."/>
        </authorList>
    </citation>
    <scope>FUNCTION OF THE ISW2 COMPLEX</scope>
</reference>
<reference key="7">
    <citation type="journal article" date="2001" name="Mol. Cell. Biol.">
        <title>Interactions of Isw2 chromatin remodeling complex with nucleosomal arrays: analyses using recombinant yeast histones and immobilized templates.</title>
        <authorList>
            <person name="Gelbart M.E."/>
            <person name="Rechsteiner T."/>
            <person name="Richmond T.J."/>
            <person name="Tsukiyama T."/>
        </authorList>
    </citation>
    <scope>FUNCTION OF THE ISW2 COMPLEX</scope>
    <scope>INTERACTION WITH ITC1</scope>
</reference>
<reference key="8">
    <citation type="journal article" date="2001" name="Mol. Cell. Biol.">
        <title>Widespread collaboration of Isw2 and Sin3-Rpd3 chromatin remodeling complexes in transcriptional repression.</title>
        <authorList>
            <person name="Fazzio T.G."/>
            <person name="Kooperberg C."/>
            <person name="Goldmark J.P."/>
            <person name="Neal C."/>
            <person name="Basom R."/>
            <person name="Delrow J."/>
            <person name="Tsukiyama T."/>
        </authorList>
    </citation>
    <scope>FUNCTION OF THE ISW2 COMPLEX</scope>
</reference>
<reference key="9">
    <citation type="journal article" date="2003" name="Nature">
        <title>Global analysis of protein localization in budding yeast.</title>
        <authorList>
            <person name="Huh W.-K."/>
            <person name="Falvo J.V."/>
            <person name="Gerke L.C."/>
            <person name="Carroll A.S."/>
            <person name="Howson R.W."/>
            <person name="Weissman J.S."/>
            <person name="O'Shea E.K."/>
        </authorList>
    </citation>
    <scope>SUBCELLULAR LOCATION [LARGE SCALE ANALYSIS]</scope>
</reference>
<reference key="10">
    <citation type="journal article" date="2003" name="Nature">
        <title>Global analysis of protein expression in yeast.</title>
        <authorList>
            <person name="Ghaemmaghami S."/>
            <person name="Huh W.-K."/>
            <person name="Bower K."/>
            <person name="Howson R.W."/>
            <person name="Belle A."/>
            <person name="Dephoure N."/>
            <person name="O'Shea E.K."/>
            <person name="Weissman J.S."/>
        </authorList>
    </citation>
    <scope>LEVEL OF PROTEIN EXPRESSION [LARGE SCALE ANALYSIS]</scope>
</reference>
<reference key="11">
    <citation type="journal article" date="2004" name="Mol. Cell. Biol.">
        <title>Noncompetitive counteractions of DNA polymerase epsilon and ISW2/yCHRAC for epigenetic inheritance of telomere position effect in Saccharomyces cerevisiae.</title>
        <authorList>
            <person name="Iida T."/>
            <person name="Araki H."/>
        </authorList>
    </citation>
    <scope>IDENTIFICATION IN THE ISW2 COMPLEX</scope>
    <scope>FUNCTION OF THE ISW2 COMPLEX</scope>
</reference>
<reference key="12">
    <citation type="journal article" date="2004" name="Mol. Cell. Biol.">
        <title>Histone fold protein Dls1p is required for Isw2-dependent chromatin remodeling in vivo.</title>
        <authorList>
            <person name="McConnell A.D."/>
            <person name="Gelbart M.E."/>
            <person name="Tsukiyama T."/>
        </authorList>
    </citation>
    <scope>IDENTIFICATION IN THE ISW2 COMPLEX</scope>
</reference>
<reference key="13">
    <citation type="journal article" date="2007" name="J. Proteome Res.">
        <title>Large-scale phosphorylation analysis of alpha-factor-arrested Saccharomyces cerevisiae.</title>
        <authorList>
            <person name="Li X."/>
            <person name="Gerber S.A."/>
            <person name="Rudner A.D."/>
            <person name="Beausoleil S.A."/>
            <person name="Haas W."/>
            <person name="Villen J."/>
            <person name="Elias J.E."/>
            <person name="Gygi S.P."/>
        </authorList>
    </citation>
    <scope>PHOSPHORYLATION [LARGE SCALE ANALYSIS] AT SER-831</scope>
    <scope>IDENTIFICATION BY MASS SPECTROMETRY [LARGE SCALE ANALYSIS]</scope>
    <source>
        <strain>ADR376</strain>
    </source>
</reference>
<reference key="14">
    <citation type="journal article" date="2008" name="Mol. Cell. Proteomics">
        <title>A multidimensional chromatography technology for in-depth phosphoproteome analysis.</title>
        <authorList>
            <person name="Albuquerque C.P."/>
            <person name="Smolka M.B."/>
            <person name="Payne S.H."/>
            <person name="Bafna V."/>
            <person name="Eng J."/>
            <person name="Zhou H."/>
        </authorList>
    </citation>
    <scope>PHOSPHORYLATION [LARGE SCALE ANALYSIS] AT SER-831; THR-1079 AND SER-1082</scope>
    <scope>IDENTIFICATION BY MASS SPECTROMETRY [LARGE SCALE ANALYSIS]</scope>
</reference>
<reference key="15">
    <citation type="journal article" date="2009" name="Science">
        <title>Global analysis of Cdk1 substrate phosphorylation sites provides insights into evolution.</title>
        <authorList>
            <person name="Holt L.J."/>
            <person name="Tuch B.B."/>
            <person name="Villen J."/>
            <person name="Johnson A.D."/>
            <person name="Gygi S.P."/>
            <person name="Morgan D.O."/>
        </authorList>
    </citation>
    <scope>PHOSPHORYLATION [LARGE SCALE ANALYSIS] AT SER-17; SER-19; SER-831; THR-1079 AND SER-1082</scope>
    <scope>IDENTIFICATION BY MASS SPECTROMETRY [LARGE SCALE ANALYSIS]</scope>
</reference>
<proteinExistence type="evidence at protein level"/>